<organism>
    <name type="scientific">Escherichia coli O157:H7 (strain EC4115 / EHEC)</name>
    <dbReference type="NCBI Taxonomy" id="444450"/>
    <lineage>
        <taxon>Bacteria</taxon>
        <taxon>Pseudomonadati</taxon>
        <taxon>Pseudomonadota</taxon>
        <taxon>Gammaproteobacteria</taxon>
        <taxon>Enterobacterales</taxon>
        <taxon>Enterobacteriaceae</taxon>
        <taxon>Escherichia</taxon>
    </lineage>
</organism>
<name>PRMA_ECO5E</name>
<evidence type="ECO:0000255" key="1">
    <source>
        <dbReference type="HAMAP-Rule" id="MF_00735"/>
    </source>
</evidence>
<accession>B5YSY4</accession>
<feature type="chain" id="PRO_1000192625" description="Ribosomal protein L11 methyltransferase">
    <location>
        <begin position="1"/>
        <end position="293"/>
    </location>
</feature>
<feature type="binding site" evidence="1">
    <location>
        <position position="145"/>
    </location>
    <ligand>
        <name>S-adenosyl-L-methionine</name>
        <dbReference type="ChEBI" id="CHEBI:59789"/>
    </ligand>
</feature>
<feature type="binding site" evidence="1">
    <location>
        <position position="166"/>
    </location>
    <ligand>
        <name>S-adenosyl-L-methionine</name>
        <dbReference type="ChEBI" id="CHEBI:59789"/>
    </ligand>
</feature>
<feature type="binding site" evidence="1">
    <location>
        <position position="188"/>
    </location>
    <ligand>
        <name>S-adenosyl-L-methionine</name>
        <dbReference type="ChEBI" id="CHEBI:59789"/>
    </ligand>
</feature>
<feature type="binding site" evidence="1">
    <location>
        <position position="230"/>
    </location>
    <ligand>
        <name>S-adenosyl-L-methionine</name>
        <dbReference type="ChEBI" id="CHEBI:59789"/>
    </ligand>
</feature>
<gene>
    <name evidence="1" type="primary">prmA</name>
    <name type="ordered locus">ECH74115_4576</name>
</gene>
<proteinExistence type="inferred from homology"/>
<sequence>MPWIQLKLNTTGANAEDLSDALMEAGAVSITFQDTHDTPVFEPLPGETRLWGDTDVIGLFDAETDMNDVVAILENHPLLGAGFAHKIEQLEDKDWEREWMDNFHPMRFGERLWICPSWRDVPDENAVNVMLDPGLAFGTGTHPTTSLCLQWLDSLDLTGKTVIDFGCGSGILAIAALKLGAAKAIGIDIDPQAIQASRDNAERNGVSDRLELYLPKDQPEEMKADVVVANILAGPLRELAPLISVLPVSGGLLGLSGILASQAESVCEAYADSFALDPVVEKEEWCRITGRKN</sequence>
<protein>
    <recommendedName>
        <fullName evidence="1">Ribosomal protein L11 methyltransferase</fullName>
        <shortName evidence="1">L11 Mtase</shortName>
        <ecNumber evidence="1">2.1.1.-</ecNumber>
    </recommendedName>
</protein>
<comment type="function">
    <text evidence="1">Methylates ribosomal protein L11.</text>
</comment>
<comment type="catalytic activity">
    <reaction evidence="1">
        <text>L-lysyl-[protein] + 3 S-adenosyl-L-methionine = N(6),N(6),N(6)-trimethyl-L-lysyl-[protein] + 3 S-adenosyl-L-homocysteine + 3 H(+)</text>
        <dbReference type="Rhea" id="RHEA:54192"/>
        <dbReference type="Rhea" id="RHEA-COMP:9752"/>
        <dbReference type="Rhea" id="RHEA-COMP:13826"/>
        <dbReference type="ChEBI" id="CHEBI:15378"/>
        <dbReference type="ChEBI" id="CHEBI:29969"/>
        <dbReference type="ChEBI" id="CHEBI:57856"/>
        <dbReference type="ChEBI" id="CHEBI:59789"/>
        <dbReference type="ChEBI" id="CHEBI:61961"/>
    </reaction>
</comment>
<comment type="subcellular location">
    <subcellularLocation>
        <location evidence="1">Cytoplasm</location>
    </subcellularLocation>
</comment>
<comment type="similarity">
    <text evidence="1">Belongs to the methyltransferase superfamily. PrmA family.</text>
</comment>
<keyword id="KW-0963">Cytoplasm</keyword>
<keyword id="KW-0489">Methyltransferase</keyword>
<keyword id="KW-0949">S-adenosyl-L-methionine</keyword>
<keyword id="KW-0808">Transferase</keyword>
<reference key="1">
    <citation type="journal article" date="2011" name="Proc. Natl. Acad. Sci. U.S.A.">
        <title>Genomic anatomy of Escherichia coli O157:H7 outbreaks.</title>
        <authorList>
            <person name="Eppinger M."/>
            <person name="Mammel M.K."/>
            <person name="Leclerc J.E."/>
            <person name="Ravel J."/>
            <person name="Cebula T.A."/>
        </authorList>
    </citation>
    <scope>NUCLEOTIDE SEQUENCE [LARGE SCALE GENOMIC DNA]</scope>
    <source>
        <strain>EC4115 / EHEC</strain>
    </source>
</reference>
<dbReference type="EC" id="2.1.1.-" evidence="1"/>
<dbReference type="EMBL" id="CP001164">
    <property type="protein sequence ID" value="ACI38407.1"/>
    <property type="molecule type" value="Genomic_DNA"/>
</dbReference>
<dbReference type="RefSeq" id="WP_001145827.1">
    <property type="nucleotide sequence ID" value="NC_011353.1"/>
</dbReference>
<dbReference type="SMR" id="B5YSY4"/>
<dbReference type="GeneID" id="75206107"/>
<dbReference type="KEGG" id="ecf:ECH74115_4576"/>
<dbReference type="HOGENOM" id="CLU_049382_4_1_6"/>
<dbReference type="GO" id="GO:0005829">
    <property type="term" value="C:cytosol"/>
    <property type="evidence" value="ECO:0007669"/>
    <property type="project" value="TreeGrafter"/>
</dbReference>
<dbReference type="GO" id="GO:0016279">
    <property type="term" value="F:protein-lysine N-methyltransferase activity"/>
    <property type="evidence" value="ECO:0007669"/>
    <property type="project" value="TreeGrafter"/>
</dbReference>
<dbReference type="GO" id="GO:0032259">
    <property type="term" value="P:methylation"/>
    <property type="evidence" value="ECO:0007669"/>
    <property type="project" value="UniProtKB-KW"/>
</dbReference>
<dbReference type="CDD" id="cd02440">
    <property type="entry name" value="AdoMet_MTases"/>
    <property type="match status" value="1"/>
</dbReference>
<dbReference type="FunFam" id="3.40.50.150:FF:000021">
    <property type="entry name" value="Ribosomal protein L11 methyltransferase"/>
    <property type="match status" value="1"/>
</dbReference>
<dbReference type="Gene3D" id="3.40.50.150">
    <property type="entry name" value="Vaccinia Virus protein VP39"/>
    <property type="match status" value="1"/>
</dbReference>
<dbReference type="HAMAP" id="MF_00735">
    <property type="entry name" value="Methyltr_PrmA"/>
    <property type="match status" value="1"/>
</dbReference>
<dbReference type="InterPro" id="IPR050078">
    <property type="entry name" value="Ribosomal_L11_MeTrfase_PrmA"/>
</dbReference>
<dbReference type="InterPro" id="IPR004498">
    <property type="entry name" value="Ribosomal_PrmA_MeTrfase"/>
</dbReference>
<dbReference type="InterPro" id="IPR029063">
    <property type="entry name" value="SAM-dependent_MTases_sf"/>
</dbReference>
<dbReference type="NCBIfam" id="TIGR00406">
    <property type="entry name" value="prmA"/>
    <property type="match status" value="1"/>
</dbReference>
<dbReference type="PANTHER" id="PTHR43648">
    <property type="entry name" value="ELECTRON TRANSFER FLAVOPROTEIN BETA SUBUNIT LYSINE METHYLTRANSFERASE"/>
    <property type="match status" value="1"/>
</dbReference>
<dbReference type="PANTHER" id="PTHR43648:SF1">
    <property type="entry name" value="ELECTRON TRANSFER FLAVOPROTEIN BETA SUBUNIT LYSINE METHYLTRANSFERASE"/>
    <property type="match status" value="1"/>
</dbReference>
<dbReference type="Pfam" id="PF06325">
    <property type="entry name" value="PrmA"/>
    <property type="match status" value="1"/>
</dbReference>
<dbReference type="PIRSF" id="PIRSF000401">
    <property type="entry name" value="RPL11_MTase"/>
    <property type="match status" value="1"/>
</dbReference>
<dbReference type="SUPFAM" id="SSF53335">
    <property type="entry name" value="S-adenosyl-L-methionine-dependent methyltransferases"/>
    <property type="match status" value="1"/>
</dbReference>